<comment type="function">
    <text evidence="1">Negatively regulates transcription of bacterial ribonucleotide reductase nrd genes and operons by binding to NrdR-boxes.</text>
</comment>
<comment type="cofactor">
    <cofactor evidence="1">
        <name>Zn(2+)</name>
        <dbReference type="ChEBI" id="CHEBI:29105"/>
    </cofactor>
    <text evidence="1">Binds 1 zinc ion.</text>
</comment>
<comment type="similarity">
    <text evidence="1">Belongs to the NrdR family.</text>
</comment>
<protein>
    <recommendedName>
        <fullName evidence="1">Transcriptional repressor NrdR</fullName>
    </recommendedName>
</protein>
<reference key="1">
    <citation type="journal article" date="2005" name="J. Bacteriol.">
        <title>Whole-genome sequencing of Staphylococcus haemolyticus uncovers the extreme plasticity of its genome and the evolution of human-colonizing staphylococcal species.</title>
        <authorList>
            <person name="Takeuchi F."/>
            <person name="Watanabe S."/>
            <person name="Baba T."/>
            <person name="Yuzawa H."/>
            <person name="Ito T."/>
            <person name="Morimoto Y."/>
            <person name="Kuroda M."/>
            <person name="Cui L."/>
            <person name="Takahashi M."/>
            <person name="Ankai A."/>
            <person name="Baba S."/>
            <person name="Fukui S."/>
            <person name="Lee J.C."/>
            <person name="Hiramatsu K."/>
        </authorList>
    </citation>
    <scope>NUCLEOTIDE SEQUENCE [LARGE SCALE GENOMIC DNA]</scope>
    <source>
        <strain>JCSC1435</strain>
    </source>
</reference>
<gene>
    <name evidence="1" type="primary">nrdR</name>
    <name type="ordered locus">SH1239</name>
</gene>
<sequence length="156" mass="18171">MKCPKCSSTHSRVVDSRHADDANAIRRRRECENCGTRFTTFEHIEVSPLIVVKKDGTREQFLREKILNGLVRSCEKRPVRYQQLEDITNKVEWQLRDSGQTEISSRDIGEHVMNLLMHVDQVSYVRFASVYKEFKDVDQLLASMQGILNDNKRSDL</sequence>
<dbReference type="EMBL" id="AP006716">
    <property type="protein sequence ID" value="BAE04548.1"/>
    <property type="molecule type" value="Genomic_DNA"/>
</dbReference>
<dbReference type="RefSeq" id="WP_011275538.1">
    <property type="nucleotide sequence ID" value="NC_007168.1"/>
</dbReference>
<dbReference type="SMR" id="Q4L727"/>
<dbReference type="GeneID" id="93780648"/>
<dbReference type="KEGG" id="sha:SH1239"/>
<dbReference type="eggNOG" id="COG1327">
    <property type="taxonomic scope" value="Bacteria"/>
</dbReference>
<dbReference type="HOGENOM" id="CLU_108412_0_0_9"/>
<dbReference type="OrthoDB" id="9807461at2"/>
<dbReference type="Proteomes" id="UP000000543">
    <property type="component" value="Chromosome"/>
</dbReference>
<dbReference type="GO" id="GO:0005524">
    <property type="term" value="F:ATP binding"/>
    <property type="evidence" value="ECO:0007669"/>
    <property type="project" value="UniProtKB-KW"/>
</dbReference>
<dbReference type="GO" id="GO:0003677">
    <property type="term" value="F:DNA binding"/>
    <property type="evidence" value="ECO:0007669"/>
    <property type="project" value="UniProtKB-KW"/>
</dbReference>
<dbReference type="GO" id="GO:0008270">
    <property type="term" value="F:zinc ion binding"/>
    <property type="evidence" value="ECO:0007669"/>
    <property type="project" value="UniProtKB-UniRule"/>
</dbReference>
<dbReference type="GO" id="GO:0045892">
    <property type="term" value="P:negative regulation of DNA-templated transcription"/>
    <property type="evidence" value="ECO:0007669"/>
    <property type="project" value="UniProtKB-UniRule"/>
</dbReference>
<dbReference type="HAMAP" id="MF_00440">
    <property type="entry name" value="NrdR"/>
    <property type="match status" value="1"/>
</dbReference>
<dbReference type="InterPro" id="IPR005144">
    <property type="entry name" value="ATP-cone_dom"/>
</dbReference>
<dbReference type="InterPro" id="IPR055173">
    <property type="entry name" value="NrdR-like_N"/>
</dbReference>
<dbReference type="InterPro" id="IPR003796">
    <property type="entry name" value="RNR_NrdR-like"/>
</dbReference>
<dbReference type="NCBIfam" id="TIGR00244">
    <property type="entry name" value="transcriptional regulator NrdR"/>
    <property type="match status" value="1"/>
</dbReference>
<dbReference type="PANTHER" id="PTHR30455">
    <property type="entry name" value="TRANSCRIPTIONAL REPRESSOR NRDR"/>
    <property type="match status" value="1"/>
</dbReference>
<dbReference type="PANTHER" id="PTHR30455:SF2">
    <property type="entry name" value="TRANSCRIPTIONAL REPRESSOR NRDR"/>
    <property type="match status" value="1"/>
</dbReference>
<dbReference type="Pfam" id="PF03477">
    <property type="entry name" value="ATP-cone"/>
    <property type="match status" value="1"/>
</dbReference>
<dbReference type="Pfam" id="PF22811">
    <property type="entry name" value="Zn_ribbon_NrdR"/>
    <property type="match status" value="1"/>
</dbReference>
<dbReference type="PROSITE" id="PS51161">
    <property type="entry name" value="ATP_CONE"/>
    <property type="match status" value="1"/>
</dbReference>
<evidence type="ECO:0000255" key="1">
    <source>
        <dbReference type="HAMAP-Rule" id="MF_00440"/>
    </source>
</evidence>
<keyword id="KW-0067">ATP-binding</keyword>
<keyword id="KW-0238">DNA-binding</keyword>
<keyword id="KW-0479">Metal-binding</keyword>
<keyword id="KW-0547">Nucleotide-binding</keyword>
<keyword id="KW-0678">Repressor</keyword>
<keyword id="KW-0804">Transcription</keyword>
<keyword id="KW-0805">Transcription regulation</keyword>
<keyword id="KW-0862">Zinc</keyword>
<keyword id="KW-0863">Zinc-finger</keyword>
<proteinExistence type="inferred from homology"/>
<organism>
    <name type="scientific">Staphylococcus haemolyticus (strain JCSC1435)</name>
    <dbReference type="NCBI Taxonomy" id="279808"/>
    <lineage>
        <taxon>Bacteria</taxon>
        <taxon>Bacillati</taxon>
        <taxon>Bacillota</taxon>
        <taxon>Bacilli</taxon>
        <taxon>Bacillales</taxon>
        <taxon>Staphylococcaceae</taxon>
        <taxon>Staphylococcus</taxon>
    </lineage>
</organism>
<name>NRDR_STAHJ</name>
<accession>Q4L727</accession>
<feature type="chain" id="PRO_0000230896" description="Transcriptional repressor NrdR">
    <location>
        <begin position="1"/>
        <end position="156"/>
    </location>
</feature>
<feature type="domain" description="ATP-cone" evidence="1">
    <location>
        <begin position="49"/>
        <end position="139"/>
    </location>
</feature>
<feature type="zinc finger region" evidence="1">
    <location>
        <begin position="3"/>
        <end position="34"/>
    </location>
</feature>